<reference key="1">
    <citation type="submission" date="2006-03" db="EMBL/GenBank/DDBJ databases">
        <title>Complete sequence of chromosome of Psychrobacter cryohalolentis K5.</title>
        <authorList>
            <consortium name="US DOE Joint Genome Institute"/>
            <person name="Copeland A."/>
            <person name="Lucas S."/>
            <person name="Lapidus A."/>
            <person name="Barry K."/>
            <person name="Detter J.C."/>
            <person name="Glavina T."/>
            <person name="Hammon N."/>
            <person name="Israni S."/>
            <person name="Dalin E."/>
            <person name="Tice H."/>
            <person name="Pitluck S."/>
            <person name="Brettin T."/>
            <person name="Bruce D."/>
            <person name="Han C."/>
            <person name="Tapia R."/>
            <person name="Sims D.R."/>
            <person name="Gilna P."/>
            <person name="Schmutz J."/>
            <person name="Larimer F."/>
            <person name="Land M."/>
            <person name="Hauser L."/>
            <person name="Kyrpides N."/>
            <person name="Kim E."/>
            <person name="Richardson P."/>
        </authorList>
    </citation>
    <scope>NUCLEOTIDE SEQUENCE [LARGE SCALE GENOMIC DNA]</scope>
    <source>
        <strain>ATCC BAA-1226 / DSM 17306 / VKM B-2378 / K5</strain>
    </source>
</reference>
<proteinExistence type="inferred from homology"/>
<comment type="function">
    <text evidence="1">A key translational regulator that binds mRNA to regulate translation initiation and/or mRNA stability. Mediates global changes in gene expression, shifting from rapid growth to stress survival by linking envelope stress, the stringent response and the catabolite repression systems. Usually binds in the 5'-UTR; binding at or near the Shine-Dalgarno sequence prevents ribosome-binding, repressing translation, binding elsewhere in the 5'-UTR can activate translation and/or stabilize the mRNA. Its function is antagonized by small RNA(s).</text>
</comment>
<comment type="subunit">
    <text evidence="1">Homodimer; the beta-strands of each monomer intercalate to form a hydrophobic core, while the alpha-helices form wings that extend away from the core.</text>
</comment>
<comment type="subcellular location">
    <subcellularLocation>
        <location evidence="1">Cytoplasm</location>
    </subcellularLocation>
</comment>
<comment type="similarity">
    <text evidence="1">Belongs to the CsrA/RsmA family.</text>
</comment>
<accession>Q1QA86</accession>
<name>CSRA_PSYCK</name>
<gene>
    <name evidence="1" type="primary">csrA</name>
    <name type="ordered locus">Pcryo_1640</name>
</gene>
<organism>
    <name type="scientific">Psychrobacter cryohalolentis (strain ATCC BAA-1226 / DSM 17306 / VKM B-2378 / K5)</name>
    <dbReference type="NCBI Taxonomy" id="335284"/>
    <lineage>
        <taxon>Bacteria</taxon>
        <taxon>Pseudomonadati</taxon>
        <taxon>Pseudomonadota</taxon>
        <taxon>Gammaproteobacteria</taxon>
        <taxon>Moraxellales</taxon>
        <taxon>Moraxellaceae</taxon>
        <taxon>Psychrobacter</taxon>
    </lineage>
</organism>
<evidence type="ECO:0000255" key="1">
    <source>
        <dbReference type="HAMAP-Rule" id="MF_00167"/>
    </source>
</evidence>
<evidence type="ECO:0000256" key="2">
    <source>
        <dbReference type="SAM" id="MobiDB-lite"/>
    </source>
</evidence>
<sequence length="81" mass="9299">MLILTRRVGETLMIGDEVSVTVLGVKGNQVRIGVDAPKDIAVHREEIYQRIQHERTVQSQMQHLEQGSFAPSFDDEDYFNR</sequence>
<dbReference type="EMBL" id="CP000323">
    <property type="protein sequence ID" value="ABE75417.1"/>
    <property type="molecule type" value="Genomic_DNA"/>
</dbReference>
<dbReference type="SMR" id="Q1QA86"/>
<dbReference type="STRING" id="335284.Pcryo_1640"/>
<dbReference type="KEGG" id="pcr:Pcryo_1640"/>
<dbReference type="eggNOG" id="COG1551">
    <property type="taxonomic scope" value="Bacteria"/>
</dbReference>
<dbReference type="HOGENOM" id="CLU_164837_2_1_6"/>
<dbReference type="Proteomes" id="UP000002425">
    <property type="component" value="Chromosome"/>
</dbReference>
<dbReference type="GO" id="GO:0005829">
    <property type="term" value="C:cytosol"/>
    <property type="evidence" value="ECO:0007669"/>
    <property type="project" value="TreeGrafter"/>
</dbReference>
<dbReference type="GO" id="GO:0048027">
    <property type="term" value="F:mRNA 5'-UTR binding"/>
    <property type="evidence" value="ECO:0007669"/>
    <property type="project" value="UniProtKB-UniRule"/>
</dbReference>
<dbReference type="GO" id="GO:0006402">
    <property type="term" value="P:mRNA catabolic process"/>
    <property type="evidence" value="ECO:0007669"/>
    <property type="project" value="InterPro"/>
</dbReference>
<dbReference type="GO" id="GO:0045947">
    <property type="term" value="P:negative regulation of translational initiation"/>
    <property type="evidence" value="ECO:0007669"/>
    <property type="project" value="UniProtKB-UniRule"/>
</dbReference>
<dbReference type="GO" id="GO:0045948">
    <property type="term" value="P:positive regulation of translational initiation"/>
    <property type="evidence" value="ECO:0007669"/>
    <property type="project" value="UniProtKB-UniRule"/>
</dbReference>
<dbReference type="GO" id="GO:0006109">
    <property type="term" value="P:regulation of carbohydrate metabolic process"/>
    <property type="evidence" value="ECO:0007669"/>
    <property type="project" value="UniProtKB-UniRule"/>
</dbReference>
<dbReference type="FunFam" id="2.60.40.4380:FF:000001">
    <property type="entry name" value="Translational regulator CsrA"/>
    <property type="match status" value="1"/>
</dbReference>
<dbReference type="Gene3D" id="2.60.40.4380">
    <property type="entry name" value="Translational regulator CsrA"/>
    <property type="match status" value="1"/>
</dbReference>
<dbReference type="HAMAP" id="MF_00167">
    <property type="entry name" value="CsrA"/>
    <property type="match status" value="1"/>
</dbReference>
<dbReference type="InterPro" id="IPR003751">
    <property type="entry name" value="CsrA"/>
</dbReference>
<dbReference type="InterPro" id="IPR036107">
    <property type="entry name" value="CsrA_sf"/>
</dbReference>
<dbReference type="NCBIfam" id="TIGR00202">
    <property type="entry name" value="csrA"/>
    <property type="match status" value="1"/>
</dbReference>
<dbReference type="NCBIfam" id="NF002469">
    <property type="entry name" value="PRK01712.1"/>
    <property type="match status" value="1"/>
</dbReference>
<dbReference type="PANTHER" id="PTHR34984">
    <property type="entry name" value="CARBON STORAGE REGULATOR"/>
    <property type="match status" value="1"/>
</dbReference>
<dbReference type="PANTHER" id="PTHR34984:SF1">
    <property type="entry name" value="CARBON STORAGE REGULATOR"/>
    <property type="match status" value="1"/>
</dbReference>
<dbReference type="Pfam" id="PF02599">
    <property type="entry name" value="CsrA"/>
    <property type="match status" value="1"/>
</dbReference>
<dbReference type="SUPFAM" id="SSF117130">
    <property type="entry name" value="CsrA-like"/>
    <property type="match status" value="1"/>
</dbReference>
<keyword id="KW-0010">Activator</keyword>
<keyword id="KW-0963">Cytoplasm</keyword>
<keyword id="KW-0678">Repressor</keyword>
<keyword id="KW-0694">RNA-binding</keyword>
<keyword id="KW-0810">Translation regulation</keyword>
<protein>
    <recommendedName>
        <fullName evidence="1">Translational regulator CsrA</fullName>
    </recommendedName>
    <alternativeName>
        <fullName evidence="1">Carbon storage regulator</fullName>
    </alternativeName>
</protein>
<feature type="chain" id="PRO_1000023410" description="Translational regulator CsrA">
    <location>
        <begin position="1"/>
        <end position="81"/>
    </location>
</feature>
<feature type="region of interest" description="Disordered" evidence="2">
    <location>
        <begin position="60"/>
        <end position="81"/>
    </location>
</feature>